<comment type="subunit">
    <text evidence="2">Interacts with TMEM106B.</text>
</comment>
<comment type="subcellular location">
    <subcellularLocation>
        <location evidence="1">Endoplasmic reticulum membrane</location>
        <topology evidence="1">Multi-pass membrane protein</topology>
    </subcellularLocation>
    <subcellularLocation>
        <location evidence="2">Membrane</location>
        <topology evidence="2">Lipid-anchor</topology>
    </subcellularLocation>
</comment>
<comment type="similarity">
    <text evidence="4">Belongs to the TMEM106 family.</text>
</comment>
<dbReference type="EMBL" id="AK134684">
    <property type="protein sequence ID" value="BAE22240.1"/>
    <property type="molecule type" value="mRNA"/>
</dbReference>
<dbReference type="EMBL" id="BC046621">
    <property type="protein sequence ID" value="AAH46621.1"/>
    <property type="molecule type" value="mRNA"/>
</dbReference>
<dbReference type="CCDS" id="CCDS27785.1"/>
<dbReference type="RefSeq" id="NP_001239082.1">
    <property type="nucleotide sequence ID" value="NM_001252153.2"/>
</dbReference>
<dbReference type="RefSeq" id="NP_001343437.1">
    <property type="nucleotide sequence ID" value="NM_001356508.2"/>
</dbReference>
<dbReference type="RefSeq" id="NP_001402995.1">
    <property type="nucleotide sequence ID" value="NM_001416066.1"/>
</dbReference>
<dbReference type="RefSeq" id="NP_001402996.1">
    <property type="nucleotide sequence ID" value="NM_001416067.1"/>
</dbReference>
<dbReference type="RefSeq" id="NP_001402997.1">
    <property type="nucleotide sequence ID" value="NM_001416068.1"/>
</dbReference>
<dbReference type="RefSeq" id="NP_001402998.1">
    <property type="nucleotide sequence ID" value="NM_001416069.1"/>
</dbReference>
<dbReference type="RefSeq" id="NP_001402999.1">
    <property type="nucleotide sequence ID" value="NM_001416070.1"/>
</dbReference>
<dbReference type="RefSeq" id="NP_958747.1">
    <property type="nucleotide sequence ID" value="NM_201359.3"/>
</dbReference>
<dbReference type="RefSeq" id="XP_006521180.1">
    <property type="nucleotide sequence ID" value="XM_006521117.1"/>
</dbReference>
<dbReference type="RefSeq" id="XP_006521182.1">
    <property type="nucleotide sequence ID" value="XM_006521119.1"/>
</dbReference>
<dbReference type="RefSeq" id="XP_006521183.1">
    <property type="nucleotide sequence ID" value="XM_006521120.3"/>
</dbReference>
<dbReference type="RefSeq" id="XP_006521184.1">
    <property type="nucleotide sequence ID" value="XM_006521121.3"/>
</dbReference>
<dbReference type="RefSeq" id="XP_017172161.1">
    <property type="nucleotide sequence ID" value="XM_017316672.1"/>
</dbReference>
<dbReference type="FunCoup" id="Q80VP8">
    <property type="interactions" value="68"/>
</dbReference>
<dbReference type="STRING" id="10090.ENSMUSP00000069764"/>
<dbReference type="GlyConnect" id="2787">
    <property type="glycosylation" value="3 N-Linked glycans (2 sites)"/>
</dbReference>
<dbReference type="GlyCosmos" id="Q80VP8">
    <property type="glycosylation" value="2 sites, 3 glycans"/>
</dbReference>
<dbReference type="GlyGen" id="Q80VP8">
    <property type="glycosylation" value="2 sites, 5 N-linked glycans (2 sites)"/>
</dbReference>
<dbReference type="iPTMnet" id="Q80VP8"/>
<dbReference type="PhosphoSitePlus" id="Q80VP8"/>
<dbReference type="PaxDb" id="10090-ENSMUSP00000069764"/>
<dbReference type="PeptideAtlas" id="Q80VP8"/>
<dbReference type="ProteomicsDB" id="254624"/>
<dbReference type="Antibodypedia" id="25478">
    <property type="antibodies" value="35 antibodies from 17 providers"/>
</dbReference>
<dbReference type="DNASU" id="380967"/>
<dbReference type="Ensembl" id="ENSMUST00000064200.9">
    <property type="protein sequence ID" value="ENSMUSP00000069764.8"/>
    <property type="gene ID" value="ENSMUSG00000052369.9"/>
</dbReference>
<dbReference type="Ensembl" id="ENSMUST00000229428.2">
    <property type="protein sequence ID" value="ENSMUSP00000154819.2"/>
    <property type="gene ID" value="ENSMUSG00000052369.9"/>
</dbReference>
<dbReference type="GeneID" id="380967"/>
<dbReference type="KEGG" id="mmu:380967"/>
<dbReference type="UCSC" id="uc007xlm.2">
    <property type="organism name" value="mouse"/>
</dbReference>
<dbReference type="AGR" id="MGI:1196384"/>
<dbReference type="CTD" id="79022"/>
<dbReference type="MGI" id="MGI:1196384">
    <property type="gene designation" value="Tmem106c"/>
</dbReference>
<dbReference type="VEuPathDB" id="HostDB:ENSMUSG00000052369"/>
<dbReference type="eggNOG" id="ENOG502QQ43">
    <property type="taxonomic scope" value="Eukaryota"/>
</dbReference>
<dbReference type="GeneTree" id="ENSGT00940000161281"/>
<dbReference type="HOGENOM" id="CLU_089337_0_0_1"/>
<dbReference type="InParanoid" id="Q80VP8"/>
<dbReference type="OMA" id="PYVYAFC"/>
<dbReference type="OrthoDB" id="508875at2759"/>
<dbReference type="PhylomeDB" id="Q80VP8"/>
<dbReference type="TreeFam" id="TF328907"/>
<dbReference type="BioGRID-ORCS" id="380967">
    <property type="hits" value="2 hits in 78 CRISPR screens"/>
</dbReference>
<dbReference type="ChiTaRS" id="Tmem106c">
    <property type="organism name" value="mouse"/>
</dbReference>
<dbReference type="PRO" id="PR:Q80VP8"/>
<dbReference type="Proteomes" id="UP000000589">
    <property type="component" value="Chromosome 15"/>
</dbReference>
<dbReference type="RNAct" id="Q80VP8">
    <property type="molecule type" value="protein"/>
</dbReference>
<dbReference type="Bgee" id="ENSMUSG00000052369">
    <property type="expression patterns" value="Expressed in retinal neural layer and 244 other cell types or tissues"/>
</dbReference>
<dbReference type="ExpressionAtlas" id="Q80VP8">
    <property type="expression patterns" value="baseline and differential"/>
</dbReference>
<dbReference type="GO" id="GO:0005789">
    <property type="term" value="C:endoplasmic reticulum membrane"/>
    <property type="evidence" value="ECO:0007669"/>
    <property type="project" value="UniProtKB-SubCell"/>
</dbReference>
<dbReference type="InterPro" id="IPR009790">
    <property type="entry name" value="TMEM106"/>
</dbReference>
<dbReference type="InterPro" id="IPR048509">
    <property type="entry name" value="TMEM106_C"/>
</dbReference>
<dbReference type="InterPro" id="IPR048511">
    <property type="entry name" value="TMEM106_N"/>
</dbReference>
<dbReference type="PANTHER" id="PTHR28556">
    <property type="entry name" value="TRANSMEMBRANE PROTEIN 106B"/>
    <property type="match status" value="1"/>
</dbReference>
<dbReference type="PANTHER" id="PTHR28556:SF5">
    <property type="entry name" value="TRANSMEMBRANE PROTEIN 106C"/>
    <property type="match status" value="1"/>
</dbReference>
<dbReference type="Pfam" id="PF07092">
    <property type="entry name" value="TMEM106"/>
    <property type="match status" value="1"/>
</dbReference>
<dbReference type="Pfam" id="PF21002">
    <property type="entry name" value="TMEM106_N"/>
    <property type="match status" value="1"/>
</dbReference>
<accession>Q80VP8</accession>
<gene>
    <name type="primary">Tmem106c</name>
    <name type="synonym">D15Ertd405e</name>
</gene>
<proteinExistence type="evidence at transcript level"/>
<protein>
    <recommendedName>
        <fullName>Transmembrane protein 106C</fullName>
    </recommendedName>
</protein>
<name>T106C_MOUSE</name>
<feature type="initiator methionine" description="Removed" evidence="2">
    <location>
        <position position="1"/>
    </location>
</feature>
<feature type="chain" id="PRO_0000243901" description="Transmembrane protein 106C">
    <location>
        <begin position="2"/>
        <end position="260"/>
    </location>
</feature>
<feature type="transmembrane region" description="Helical" evidence="3">
    <location>
        <begin position="85"/>
        <end position="105"/>
    </location>
</feature>
<feature type="transmembrane region" description="Helical" evidence="3">
    <location>
        <begin position="196"/>
        <end position="216"/>
    </location>
</feature>
<feature type="lipid moiety-binding region" description="N-myristoyl glycine" evidence="2">
    <location>
        <position position="2"/>
    </location>
</feature>
<feature type="glycosylation site" description="N-linked (GlcNAc...) asparagine" evidence="3">
    <location>
        <position position="184"/>
    </location>
</feature>
<keyword id="KW-0256">Endoplasmic reticulum</keyword>
<keyword id="KW-0325">Glycoprotein</keyword>
<keyword id="KW-0449">Lipoprotein</keyword>
<keyword id="KW-0472">Membrane</keyword>
<keyword id="KW-0519">Myristate</keyword>
<keyword id="KW-1185">Reference proteome</keyword>
<keyword id="KW-0812">Transmembrane</keyword>
<keyword id="KW-1133">Transmembrane helix</keyword>
<sequence>MGSQHSSALTFCQRKKDDNPEDLLADRDQEEAIAQFPYVEFTGRNSITCHTCQGAGYIPAEQVNELVALIPHSDQRLRPQRTKQYVLLSVLLCLLASGLVFFFLFPHSVLVDDNGIKVTKVTFNEQDSLVVLDVTATLKIRNSNFYPVAVTNLFSQVQYMKAVVGSYTTTNVSLIAPRSEHLVNFTVKAEVGGPSSYVYFYCTLPAIRVHNIVIFMRTSVKISYIGHISQSTLETQHYVDCGVNSTAAQSLFLVPRGPHL</sequence>
<organism>
    <name type="scientific">Mus musculus</name>
    <name type="common">Mouse</name>
    <dbReference type="NCBI Taxonomy" id="10090"/>
    <lineage>
        <taxon>Eukaryota</taxon>
        <taxon>Metazoa</taxon>
        <taxon>Chordata</taxon>
        <taxon>Craniata</taxon>
        <taxon>Vertebrata</taxon>
        <taxon>Euteleostomi</taxon>
        <taxon>Mammalia</taxon>
        <taxon>Eutheria</taxon>
        <taxon>Euarchontoglires</taxon>
        <taxon>Glires</taxon>
        <taxon>Rodentia</taxon>
        <taxon>Myomorpha</taxon>
        <taxon>Muroidea</taxon>
        <taxon>Muridae</taxon>
        <taxon>Murinae</taxon>
        <taxon>Mus</taxon>
        <taxon>Mus</taxon>
    </lineage>
</organism>
<evidence type="ECO:0000250" key="1"/>
<evidence type="ECO:0000250" key="2">
    <source>
        <dbReference type="UniProtKB" id="Q9BVX2"/>
    </source>
</evidence>
<evidence type="ECO:0000255" key="3"/>
<evidence type="ECO:0000305" key="4"/>
<reference key="1">
    <citation type="journal article" date="2005" name="Science">
        <title>The transcriptional landscape of the mammalian genome.</title>
        <authorList>
            <person name="Carninci P."/>
            <person name="Kasukawa T."/>
            <person name="Katayama S."/>
            <person name="Gough J."/>
            <person name="Frith M.C."/>
            <person name="Maeda N."/>
            <person name="Oyama R."/>
            <person name="Ravasi T."/>
            <person name="Lenhard B."/>
            <person name="Wells C."/>
            <person name="Kodzius R."/>
            <person name="Shimokawa K."/>
            <person name="Bajic V.B."/>
            <person name="Brenner S.E."/>
            <person name="Batalov S."/>
            <person name="Forrest A.R."/>
            <person name="Zavolan M."/>
            <person name="Davis M.J."/>
            <person name="Wilming L.G."/>
            <person name="Aidinis V."/>
            <person name="Allen J.E."/>
            <person name="Ambesi-Impiombato A."/>
            <person name="Apweiler R."/>
            <person name="Aturaliya R.N."/>
            <person name="Bailey T.L."/>
            <person name="Bansal M."/>
            <person name="Baxter L."/>
            <person name="Beisel K.W."/>
            <person name="Bersano T."/>
            <person name="Bono H."/>
            <person name="Chalk A.M."/>
            <person name="Chiu K.P."/>
            <person name="Choudhary V."/>
            <person name="Christoffels A."/>
            <person name="Clutterbuck D.R."/>
            <person name="Crowe M.L."/>
            <person name="Dalla E."/>
            <person name="Dalrymple B.P."/>
            <person name="de Bono B."/>
            <person name="Della Gatta G."/>
            <person name="di Bernardo D."/>
            <person name="Down T."/>
            <person name="Engstrom P."/>
            <person name="Fagiolini M."/>
            <person name="Faulkner G."/>
            <person name="Fletcher C.F."/>
            <person name="Fukushima T."/>
            <person name="Furuno M."/>
            <person name="Futaki S."/>
            <person name="Gariboldi M."/>
            <person name="Georgii-Hemming P."/>
            <person name="Gingeras T.R."/>
            <person name="Gojobori T."/>
            <person name="Green R.E."/>
            <person name="Gustincich S."/>
            <person name="Harbers M."/>
            <person name="Hayashi Y."/>
            <person name="Hensch T.K."/>
            <person name="Hirokawa N."/>
            <person name="Hill D."/>
            <person name="Huminiecki L."/>
            <person name="Iacono M."/>
            <person name="Ikeo K."/>
            <person name="Iwama A."/>
            <person name="Ishikawa T."/>
            <person name="Jakt M."/>
            <person name="Kanapin A."/>
            <person name="Katoh M."/>
            <person name="Kawasawa Y."/>
            <person name="Kelso J."/>
            <person name="Kitamura H."/>
            <person name="Kitano H."/>
            <person name="Kollias G."/>
            <person name="Krishnan S.P."/>
            <person name="Kruger A."/>
            <person name="Kummerfeld S.K."/>
            <person name="Kurochkin I.V."/>
            <person name="Lareau L.F."/>
            <person name="Lazarevic D."/>
            <person name="Lipovich L."/>
            <person name="Liu J."/>
            <person name="Liuni S."/>
            <person name="McWilliam S."/>
            <person name="Madan Babu M."/>
            <person name="Madera M."/>
            <person name="Marchionni L."/>
            <person name="Matsuda H."/>
            <person name="Matsuzawa S."/>
            <person name="Miki H."/>
            <person name="Mignone F."/>
            <person name="Miyake S."/>
            <person name="Morris K."/>
            <person name="Mottagui-Tabar S."/>
            <person name="Mulder N."/>
            <person name="Nakano N."/>
            <person name="Nakauchi H."/>
            <person name="Ng P."/>
            <person name="Nilsson R."/>
            <person name="Nishiguchi S."/>
            <person name="Nishikawa S."/>
            <person name="Nori F."/>
            <person name="Ohara O."/>
            <person name="Okazaki Y."/>
            <person name="Orlando V."/>
            <person name="Pang K.C."/>
            <person name="Pavan W.J."/>
            <person name="Pavesi G."/>
            <person name="Pesole G."/>
            <person name="Petrovsky N."/>
            <person name="Piazza S."/>
            <person name="Reed J."/>
            <person name="Reid J.F."/>
            <person name="Ring B.Z."/>
            <person name="Ringwald M."/>
            <person name="Rost B."/>
            <person name="Ruan Y."/>
            <person name="Salzberg S.L."/>
            <person name="Sandelin A."/>
            <person name="Schneider C."/>
            <person name="Schoenbach C."/>
            <person name="Sekiguchi K."/>
            <person name="Semple C.A."/>
            <person name="Seno S."/>
            <person name="Sessa L."/>
            <person name="Sheng Y."/>
            <person name="Shibata Y."/>
            <person name="Shimada H."/>
            <person name="Shimada K."/>
            <person name="Silva D."/>
            <person name="Sinclair B."/>
            <person name="Sperling S."/>
            <person name="Stupka E."/>
            <person name="Sugiura K."/>
            <person name="Sultana R."/>
            <person name="Takenaka Y."/>
            <person name="Taki K."/>
            <person name="Tammoja K."/>
            <person name="Tan S.L."/>
            <person name="Tang S."/>
            <person name="Taylor M.S."/>
            <person name="Tegner J."/>
            <person name="Teichmann S.A."/>
            <person name="Ueda H.R."/>
            <person name="van Nimwegen E."/>
            <person name="Verardo R."/>
            <person name="Wei C.L."/>
            <person name="Yagi K."/>
            <person name="Yamanishi H."/>
            <person name="Zabarovsky E."/>
            <person name="Zhu S."/>
            <person name="Zimmer A."/>
            <person name="Hide W."/>
            <person name="Bult C."/>
            <person name="Grimmond S.M."/>
            <person name="Teasdale R.D."/>
            <person name="Liu E.T."/>
            <person name="Brusic V."/>
            <person name="Quackenbush J."/>
            <person name="Wahlestedt C."/>
            <person name="Mattick J.S."/>
            <person name="Hume D.A."/>
            <person name="Kai C."/>
            <person name="Sasaki D."/>
            <person name="Tomaru Y."/>
            <person name="Fukuda S."/>
            <person name="Kanamori-Katayama M."/>
            <person name="Suzuki M."/>
            <person name="Aoki J."/>
            <person name="Arakawa T."/>
            <person name="Iida J."/>
            <person name="Imamura K."/>
            <person name="Itoh M."/>
            <person name="Kato T."/>
            <person name="Kawaji H."/>
            <person name="Kawagashira N."/>
            <person name="Kawashima T."/>
            <person name="Kojima M."/>
            <person name="Kondo S."/>
            <person name="Konno H."/>
            <person name="Nakano K."/>
            <person name="Ninomiya N."/>
            <person name="Nishio T."/>
            <person name="Okada M."/>
            <person name="Plessy C."/>
            <person name="Shibata K."/>
            <person name="Shiraki T."/>
            <person name="Suzuki S."/>
            <person name="Tagami M."/>
            <person name="Waki K."/>
            <person name="Watahiki A."/>
            <person name="Okamura-Oho Y."/>
            <person name="Suzuki H."/>
            <person name="Kawai J."/>
            <person name="Hayashizaki Y."/>
        </authorList>
    </citation>
    <scope>NUCLEOTIDE SEQUENCE [LARGE SCALE MRNA]</scope>
    <source>
        <strain>C57BL/6J</strain>
        <tissue>Medulla oblongata</tissue>
    </source>
</reference>
<reference key="2">
    <citation type="journal article" date="2004" name="Genome Res.">
        <title>The status, quality, and expansion of the NIH full-length cDNA project: the Mammalian Gene Collection (MGC).</title>
        <authorList>
            <consortium name="The MGC Project Team"/>
        </authorList>
    </citation>
    <scope>NUCLEOTIDE SEQUENCE [LARGE SCALE MRNA]</scope>
    <source>
        <tissue>Olfactory epithelium</tissue>
    </source>
</reference>